<organism>
    <name type="scientific">Arabidopsis thaliana</name>
    <name type="common">Mouse-ear cress</name>
    <dbReference type="NCBI Taxonomy" id="3702"/>
    <lineage>
        <taxon>Eukaryota</taxon>
        <taxon>Viridiplantae</taxon>
        <taxon>Streptophyta</taxon>
        <taxon>Embryophyta</taxon>
        <taxon>Tracheophyta</taxon>
        <taxon>Spermatophyta</taxon>
        <taxon>Magnoliopsida</taxon>
        <taxon>eudicotyledons</taxon>
        <taxon>Gunneridae</taxon>
        <taxon>Pentapetalae</taxon>
        <taxon>rosids</taxon>
        <taxon>malvids</taxon>
        <taxon>Brassicales</taxon>
        <taxon>Brassicaceae</taxon>
        <taxon>Camelineae</taxon>
        <taxon>Arabidopsis</taxon>
    </lineage>
</organism>
<accession>F4HZH9</accession>
<accession>Q9XI53</accession>
<gene>
    <name evidence="2" type="primary">DTX11</name>
    <name evidence="4" type="ordered locus">At1g15160</name>
    <name evidence="5" type="ORF">F9L1.10</name>
</gene>
<proteinExistence type="inferred from homology"/>
<feature type="chain" id="PRO_0000434054" description="Protein DETOXIFICATION 11">
    <location>
        <begin position="1"/>
        <end position="487"/>
    </location>
</feature>
<feature type="transmembrane region" description="Helical" evidence="1">
    <location>
        <begin position="35"/>
        <end position="55"/>
    </location>
</feature>
<feature type="transmembrane region" description="Helical" evidence="1">
    <location>
        <begin position="73"/>
        <end position="93"/>
    </location>
</feature>
<feature type="transmembrane region" description="Helical" evidence="1">
    <location>
        <begin position="122"/>
        <end position="142"/>
    </location>
</feature>
<feature type="transmembrane region" description="Helical" evidence="1">
    <location>
        <begin position="151"/>
        <end position="171"/>
    </location>
</feature>
<feature type="transmembrane region" description="Helical" evidence="1">
    <location>
        <begin position="184"/>
        <end position="204"/>
    </location>
</feature>
<feature type="transmembrane region" description="Helical" evidence="1">
    <location>
        <begin position="211"/>
        <end position="231"/>
    </location>
</feature>
<feature type="transmembrane region" description="Helical" evidence="1">
    <location>
        <begin position="264"/>
        <end position="284"/>
    </location>
</feature>
<feature type="transmembrane region" description="Helical" evidence="1">
    <location>
        <begin position="293"/>
        <end position="313"/>
    </location>
</feature>
<feature type="transmembrane region" description="Helical" evidence="1">
    <location>
        <begin position="330"/>
        <end position="350"/>
    </location>
</feature>
<feature type="transmembrane region" description="Helical" evidence="1">
    <location>
        <begin position="377"/>
        <end position="397"/>
    </location>
</feature>
<feature type="transmembrane region" description="Helical" evidence="1">
    <location>
        <begin position="412"/>
        <end position="432"/>
    </location>
</feature>
<feature type="transmembrane region" description="Helical" evidence="1">
    <location>
        <begin position="435"/>
        <end position="455"/>
    </location>
</feature>
<comment type="subcellular location">
    <subcellularLocation>
        <location evidence="1">Membrane</location>
        <topology evidence="1">Multi-pass membrane protein</topology>
    </subcellularLocation>
</comment>
<comment type="similarity">
    <text evidence="3">Belongs to the multi antimicrobial extrusion (MATE) (TC 2.A.66.1) family.</text>
</comment>
<comment type="sequence caution" evidence="3">
    <conflict type="erroneous gene model prediction">
        <sequence resource="EMBL-CDS" id="AAD39648"/>
    </conflict>
</comment>
<evidence type="ECO:0000255" key="1"/>
<evidence type="ECO:0000303" key="2">
    <source>
    </source>
</evidence>
<evidence type="ECO:0000305" key="3"/>
<evidence type="ECO:0000312" key="4">
    <source>
        <dbReference type="Araport" id="AT1G15160"/>
    </source>
</evidence>
<evidence type="ECO:0000312" key="5">
    <source>
        <dbReference type="EMBL" id="AAD39648.1"/>
    </source>
</evidence>
<name>DTX11_ARATH</name>
<sequence>MEDAESTTKDPVDRVEKVTWRDLQDGSFTAELKKLICFAAPMAAVVITQSMLQIITMVIVGHLGRLSLASASFAISFCNVTGFSFIMGLSCALDTLSGQAYGAKLYRKLGVQAYTAMFCLTLVCLPLSLLWFNMGKLLVILGQDPSIAHEAGRFAAWLIPGLFAYAVLQPLTRYFKNQSLITPLLITSCVVFCLHVPLCWLLVYKSGLDHIGGALALSLSYWLYAIFLGSFMYFSSACSETRAPLTMEIFEGVREFIKYALPSAAMLCLEWWSYELIILLSGLLPNPQLETSVLSVCLQTLSMTYSIPLAIAAAASTRISNELGAGNSRAAHIVVYAAMSLAVVDALMVGTSLLAGKNLLGQVFSSDKNTIDYVAKMAPLVSISLILDSLQGVLSGVASGCGWQHIGAYINFGAFYLWGIPIAASLAFWVHLKGVGLWIGIIAGAVLQTLLLALVTGCINWENQAREARKRMAVAHESELTESELPF</sequence>
<dbReference type="EMBL" id="AC007591">
    <property type="protein sequence ID" value="AAD39648.1"/>
    <property type="status" value="ALT_SEQ"/>
    <property type="molecule type" value="Genomic_DNA"/>
</dbReference>
<dbReference type="EMBL" id="CP002684">
    <property type="protein sequence ID" value="AEE29275.1"/>
    <property type="molecule type" value="Genomic_DNA"/>
</dbReference>
<dbReference type="PIR" id="E86285">
    <property type="entry name" value="E86285"/>
</dbReference>
<dbReference type="RefSeq" id="NP_172968.1">
    <property type="nucleotide sequence ID" value="NM_101384.2"/>
</dbReference>
<dbReference type="SMR" id="F4HZH9"/>
<dbReference type="FunCoup" id="F4HZH9">
    <property type="interactions" value="477"/>
</dbReference>
<dbReference type="PaxDb" id="3702-AT1G15160.1"/>
<dbReference type="EnsemblPlants" id="AT1G15160.1">
    <property type="protein sequence ID" value="AT1G15160.1"/>
    <property type="gene ID" value="AT1G15160"/>
</dbReference>
<dbReference type="GeneID" id="838081"/>
<dbReference type="Gramene" id="AT1G15160.1">
    <property type="protein sequence ID" value="AT1G15160.1"/>
    <property type="gene ID" value="AT1G15160"/>
</dbReference>
<dbReference type="KEGG" id="ath:AT1G15160"/>
<dbReference type="Araport" id="AT1G15160"/>
<dbReference type="TAIR" id="AT1G15160"/>
<dbReference type="eggNOG" id="KOG1347">
    <property type="taxonomic scope" value="Eukaryota"/>
</dbReference>
<dbReference type="HOGENOM" id="CLU_012893_1_0_1"/>
<dbReference type="InParanoid" id="F4HZH9"/>
<dbReference type="OMA" id="CFHAPLC"/>
<dbReference type="PRO" id="PR:F4HZH9"/>
<dbReference type="Proteomes" id="UP000006548">
    <property type="component" value="Chromosome 1"/>
</dbReference>
<dbReference type="ExpressionAtlas" id="F4HZH9">
    <property type="expression patterns" value="baseline and differential"/>
</dbReference>
<dbReference type="GO" id="GO:0016020">
    <property type="term" value="C:membrane"/>
    <property type="evidence" value="ECO:0007669"/>
    <property type="project" value="UniProtKB-SubCell"/>
</dbReference>
<dbReference type="GO" id="GO:0015297">
    <property type="term" value="F:antiporter activity"/>
    <property type="evidence" value="ECO:0007669"/>
    <property type="project" value="InterPro"/>
</dbReference>
<dbReference type="GO" id="GO:0042910">
    <property type="term" value="F:xenobiotic transmembrane transporter activity"/>
    <property type="evidence" value="ECO:0007669"/>
    <property type="project" value="InterPro"/>
</dbReference>
<dbReference type="GO" id="GO:1990961">
    <property type="term" value="P:xenobiotic detoxification by transmembrane export across the plasma membrane"/>
    <property type="evidence" value="ECO:0007669"/>
    <property type="project" value="InterPro"/>
</dbReference>
<dbReference type="CDD" id="cd13132">
    <property type="entry name" value="MATE_eukaryotic"/>
    <property type="match status" value="1"/>
</dbReference>
<dbReference type="InterPro" id="IPR045069">
    <property type="entry name" value="MATE_euk"/>
</dbReference>
<dbReference type="InterPro" id="IPR002528">
    <property type="entry name" value="MATE_fam"/>
</dbReference>
<dbReference type="NCBIfam" id="TIGR00797">
    <property type="entry name" value="matE"/>
    <property type="match status" value="1"/>
</dbReference>
<dbReference type="PANTHER" id="PTHR11206">
    <property type="entry name" value="MULTIDRUG RESISTANCE PROTEIN"/>
    <property type="match status" value="1"/>
</dbReference>
<dbReference type="Pfam" id="PF01554">
    <property type="entry name" value="MatE"/>
    <property type="match status" value="2"/>
</dbReference>
<keyword id="KW-0472">Membrane</keyword>
<keyword id="KW-1185">Reference proteome</keyword>
<keyword id="KW-0812">Transmembrane</keyword>
<keyword id="KW-1133">Transmembrane helix</keyword>
<keyword id="KW-0813">Transport</keyword>
<protein>
    <recommendedName>
        <fullName evidence="2">Protein DETOXIFICATION 11</fullName>
        <shortName evidence="2">AtDTX11</shortName>
    </recommendedName>
    <alternativeName>
        <fullName evidence="3">Multidrug and toxic compound extrusion protein 11</fullName>
        <shortName evidence="3">MATE protein 11</shortName>
    </alternativeName>
</protein>
<reference key="1">
    <citation type="journal article" date="2000" name="Nature">
        <title>Sequence and analysis of chromosome 1 of the plant Arabidopsis thaliana.</title>
        <authorList>
            <person name="Theologis A."/>
            <person name="Ecker J.R."/>
            <person name="Palm C.J."/>
            <person name="Federspiel N.A."/>
            <person name="Kaul S."/>
            <person name="White O."/>
            <person name="Alonso J."/>
            <person name="Altafi H."/>
            <person name="Araujo R."/>
            <person name="Bowman C.L."/>
            <person name="Brooks S.Y."/>
            <person name="Buehler E."/>
            <person name="Chan A."/>
            <person name="Chao Q."/>
            <person name="Chen H."/>
            <person name="Cheuk R.F."/>
            <person name="Chin C.W."/>
            <person name="Chung M.K."/>
            <person name="Conn L."/>
            <person name="Conway A.B."/>
            <person name="Conway A.R."/>
            <person name="Creasy T.H."/>
            <person name="Dewar K."/>
            <person name="Dunn P."/>
            <person name="Etgu P."/>
            <person name="Feldblyum T.V."/>
            <person name="Feng J.-D."/>
            <person name="Fong B."/>
            <person name="Fujii C.Y."/>
            <person name="Gill J.E."/>
            <person name="Goldsmith A.D."/>
            <person name="Haas B."/>
            <person name="Hansen N.F."/>
            <person name="Hughes B."/>
            <person name="Huizar L."/>
            <person name="Hunter J.L."/>
            <person name="Jenkins J."/>
            <person name="Johnson-Hopson C."/>
            <person name="Khan S."/>
            <person name="Khaykin E."/>
            <person name="Kim C.J."/>
            <person name="Koo H.L."/>
            <person name="Kremenetskaia I."/>
            <person name="Kurtz D.B."/>
            <person name="Kwan A."/>
            <person name="Lam B."/>
            <person name="Langin-Hooper S."/>
            <person name="Lee A."/>
            <person name="Lee J.M."/>
            <person name="Lenz C.A."/>
            <person name="Li J.H."/>
            <person name="Li Y.-P."/>
            <person name="Lin X."/>
            <person name="Liu S.X."/>
            <person name="Liu Z.A."/>
            <person name="Luros J.S."/>
            <person name="Maiti R."/>
            <person name="Marziali A."/>
            <person name="Militscher J."/>
            <person name="Miranda M."/>
            <person name="Nguyen M."/>
            <person name="Nierman W.C."/>
            <person name="Osborne B.I."/>
            <person name="Pai G."/>
            <person name="Peterson J."/>
            <person name="Pham P.K."/>
            <person name="Rizzo M."/>
            <person name="Rooney T."/>
            <person name="Rowley D."/>
            <person name="Sakano H."/>
            <person name="Salzberg S.L."/>
            <person name="Schwartz J.R."/>
            <person name="Shinn P."/>
            <person name="Southwick A.M."/>
            <person name="Sun H."/>
            <person name="Tallon L.J."/>
            <person name="Tambunga G."/>
            <person name="Toriumi M.J."/>
            <person name="Town C.D."/>
            <person name="Utterback T."/>
            <person name="Van Aken S."/>
            <person name="Vaysberg M."/>
            <person name="Vysotskaia V.S."/>
            <person name="Walker M."/>
            <person name="Wu D."/>
            <person name="Yu G."/>
            <person name="Fraser C.M."/>
            <person name="Venter J.C."/>
            <person name="Davis R.W."/>
        </authorList>
    </citation>
    <scope>NUCLEOTIDE SEQUENCE [LARGE SCALE GENOMIC DNA]</scope>
    <source>
        <strain>cv. Columbia</strain>
    </source>
</reference>
<reference key="2">
    <citation type="journal article" date="2017" name="Plant J.">
        <title>Araport11: a complete reannotation of the Arabidopsis thaliana reference genome.</title>
        <authorList>
            <person name="Cheng C.Y."/>
            <person name="Krishnakumar V."/>
            <person name="Chan A.P."/>
            <person name="Thibaud-Nissen F."/>
            <person name="Schobel S."/>
            <person name="Town C.D."/>
        </authorList>
    </citation>
    <scope>GENOME REANNOTATION</scope>
    <source>
        <strain>cv. Columbia</strain>
    </source>
</reference>
<reference key="3">
    <citation type="journal article" date="2002" name="J. Biol. Chem.">
        <title>Functional cloning and characterization of a plant efflux carrier for multidrug and heavy metal detoxification.</title>
        <authorList>
            <person name="Li L."/>
            <person name="He Z."/>
            <person name="Pandey G.K."/>
            <person name="Tsuchiya T."/>
            <person name="Luan S."/>
        </authorList>
    </citation>
    <scope>GENE FAMILY</scope>
    <scope>NOMENCLATURE</scope>
</reference>
<reference key="4">
    <citation type="journal article" date="2003" name="Eur. J. Biochem.">
        <title>The multidrug/oligosaccharidyl-lipid/polysaccharide (MOP) exporter superfamily.</title>
        <authorList>
            <person name="Hvorup R.N."/>
            <person name="Winnen B."/>
            <person name="Chang A.B."/>
            <person name="Jiang Y."/>
            <person name="Zhou X.F."/>
            <person name="Saier M.H. Jr."/>
        </authorList>
    </citation>
    <scope>GENE FAMILY</scope>
</reference>